<comment type="subcellular location">
    <subcellularLocation>
        <location evidence="2">Secreted</location>
    </subcellularLocation>
</comment>
<accession>Q9K323</accession>
<name>CEP_VIBCH</name>
<reference key="1">
    <citation type="journal article" date="1993" name="Proc. Natl. Acad. Sci. U.S.A.">
        <title>CTX genetic element encodes a site-specific recombination system and an intestinal colonization factor.</title>
        <authorList>
            <person name="Pearson G.D."/>
            <person name="Woods A."/>
            <person name="Chiang S.L."/>
            <person name="Mekalanos J.J."/>
        </authorList>
    </citation>
    <scope>NUCLEOTIDE SEQUENCE [GENOMIC DNA]</scope>
    <source>
        <strain>ATCC 55056 / El Tor Ogawa E7946</strain>
    </source>
</reference>
<reference key="2">
    <citation type="journal article" date="2000" name="Nature">
        <title>DNA sequence of both chromosomes of the cholera pathogen Vibrio cholerae.</title>
        <authorList>
            <person name="Heidelberg J.F."/>
            <person name="Eisen J.A."/>
            <person name="Nelson W.C."/>
            <person name="Clayton R.A."/>
            <person name="Gwinn M.L."/>
            <person name="Dodson R.J."/>
            <person name="Haft D.H."/>
            <person name="Hickey E.K."/>
            <person name="Peterson J.D."/>
            <person name="Umayam L.A."/>
            <person name="Gill S.R."/>
            <person name="Nelson K.E."/>
            <person name="Read T.D."/>
            <person name="Tettelin H."/>
            <person name="Richardson D.L."/>
            <person name="Ermolaeva M.D."/>
            <person name="Vamathevan J.J."/>
            <person name="Bass S."/>
            <person name="Qin H."/>
            <person name="Dragoi I."/>
            <person name="Sellers P."/>
            <person name="McDonald L.A."/>
            <person name="Utterback T.R."/>
            <person name="Fleischmann R.D."/>
            <person name="Nierman W.C."/>
            <person name="White O."/>
            <person name="Salzberg S.L."/>
            <person name="Smith H.O."/>
            <person name="Colwell R.R."/>
            <person name="Mekalanos J.J."/>
            <person name="Venter J.C."/>
            <person name="Fraser C.M."/>
        </authorList>
    </citation>
    <scope>NUCLEOTIDE SEQUENCE [LARGE SCALE GENOMIC DNA]</scope>
    <source>
        <strain>ATCC 39315 / El Tor Inaba N16961</strain>
    </source>
</reference>
<reference key="3">
    <citation type="submission" date="2000-01" db="EMBL/GenBank/DDBJ databases">
        <title>Vibrio cholerae nct-CTXphi whole genome, include rstR(RstR), rstA(RstA), rstB(RstB), cep(Cep), orfU(OrfU), ace(Ace) and zot(Zot) genes.</title>
        <authorList>
            <person name="Kan B."/>
            <person name="Liu Y.Q."/>
            <person name="Qi G.M."/>
            <person name="Gao S.Y."/>
        </authorList>
    </citation>
    <scope>NUCLEOTIDE SEQUENCE [GENOMIC DNA]</scope>
    <source>
        <strain>El Tor 86015 / Serotype O1</strain>
    </source>
</reference>
<sequence length="82" mass="8480">MFSSLKNKLNTFKSTLSLGVFLLFSAFANQALAAADAGLVTEVTKTLGTSKDTVIALGPLIMGVVGAIVLIVTVIGLIRKAK</sequence>
<protein>
    <recommendedName>
        <fullName>Colonization factor</fullName>
    </recommendedName>
</protein>
<keyword id="KW-1185">Reference proteome</keyword>
<keyword id="KW-0964">Secreted</keyword>
<keyword id="KW-0732">Signal</keyword>
<dbReference type="EMBL" id="AE003852">
    <property type="protein sequence ID" value="AAF94618.1"/>
    <property type="molecule type" value="Genomic_DNA"/>
</dbReference>
<dbReference type="EMBL" id="AF220606">
    <property type="protein sequence ID" value="AAF29544.1"/>
    <property type="molecule type" value="Genomic_DNA"/>
</dbReference>
<dbReference type="PIR" id="A47482">
    <property type="entry name" value="A47482"/>
</dbReference>
<dbReference type="RefSeq" id="NP_231104.1">
    <property type="nucleotide sequence ID" value="NC_002505.1"/>
</dbReference>
<dbReference type="RefSeq" id="WP_000493022.1">
    <property type="nucleotide sequence ID" value="NZ_LT906614.1"/>
</dbReference>
<dbReference type="STRING" id="243277.VC_1461"/>
<dbReference type="DNASU" id="2613967"/>
<dbReference type="EnsemblBacteria" id="AAF94618">
    <property type="protein sequence ID" value="AAF94618"/>
    <property type="gene ID" value="VC_1461"/>
</dbReference>
<dbReference type="KEGG" id="vch:VC_1461"/>
<dbReference type="PATRIC" id="fig|243277.26.peg.1391"/>
<dbReference type="HOGENOM" id="CLU_2557358_0_0_6"/>
<dbReference type="Proteomes" id="UP000000584">
    <property type="component" value="Chromosome 1"/>
</dbReference>
<dbReference type="GO" id="GO:0005576">
    <property type="term" value="C:extracellular region"/>
    <property type="evidence" value="ECO:0007669"/>
    <property type="project" value="UniProtKB-SubCell"/>
</dbReference>
<proteinExistence type="inferred from homology"/>
<evidence type="ECO:0000255" key="1"/>
<evidence type="ECO:0000305" key="2"/>
<organism>
    <name type="scientific">Vibrio cholerae serotype O1 (strain ATCC 39315 / El Tor Inaba N16961)</name>
    <dbReference type="NCBI Taxonomy" id="243277"/>
    <lineage>
        <taxon>Bacteria</taxon>
        <taxon>Pseudomonadati</taxon>
        <taxon>Pseudomonadota</taxon>
        <taxon>Gammaproteobacteria</taxon>
        <taxon>Vibrionales</taxon>
        <taxon>Vibrionaceae</taxon>
        <taxon>Vibrio</taxon>
    </lineage>
</organism>
<gene>
    <name type="primary">cep</name>
    <name type="ordered locus">VC_1461</name>
</gene>
<feature type="signal peptide" evidence="1">
    <location>
        <begin position="1"/>
        <end position="33"/>
    </location>
</feature>
<feature type="chain" id="PRO_0000020922" description="Colonization factor">
    <location>
        <begin position="34"/>
        <end position="82"/>
    </location>
</feature>